<name>MDH_RICRO</name>
<reference key="1">
    <citation type="journal article" date="2008" name="Infect. Immun.">
        <title>Genomic comparison of virulent Rickettsia rickettsii Sheila Smith and avirulent Rickettsia rickettsii Iowa.</title>
        <authorList>
            <person name="Ellison D.W."/>
            <person name="Clark T.R."/>
            <person name="Sturdevant D.E."/>
            <person name="Virtaneva K."/>
            <person name="Porcella S.F."/>
            <person name="Hackstadt T."/>
        </authorList>
    </citation>
    <scope>NUCLEOTIDE SEQUENCE [LARGE SCALE GENOMIC DNA]</scope>
    <source>
        <strain>Iowa</strain>
    </source>
</reference>
<feature type="chain" id="PRO_1000081365" description="Malate dehydrogenase">
    <location>
        <begin position="1"/>
        <end position="314"/>
    </location>
</feature>
<feature type="active site" description="Proton acceptor" evidence="1">
    <location>
        <position position="177"/>
    </location>
</feature>
<feature type="binding site" evidence="1">
    <location>
        <begin position="11"/>
        <end position="16"/>
    </location>
    <ligand>
        <name>NAD(+)</name>
        <dbReference type="ChEBI" id="CHEBI:57540"/>
    </ligand>
</feature>
<feature type="binding site" evidence="1">
    <location>
        <position position="35"/>
    </location>
    <ligand>
        <name>NAD(+)</name>
        <dbReference type="ChEBI" id="CHEBI:57540"/>
    </ligand>
</feature>
<feature type="binding site" evidence="1">
    <location>
        <position position="84"/>
    </location>
    <ligand>
        <name>substrate</name>
    </ligand>
</feature>
<feature type="binding site" evidence="1">
    <location>
        <position position="90"/>
    </location>
    <ligand>
        <name>substrate</name>
    </ligand>
</feature>
<feature type="binding site" evidence="1">
    <location>
        <position position="97"/>
    </location>
    <ligand>
        <name>NAD(+)</name>
        <dbReference type="ChEBI" id="CHEBI:57540"/>
    </ligand>
</feature>
<feature type="binding site" evidence="1">
    <location>
        <begin position="120"/>
        <end position="122"/>
    </location>
    <ligand>
        <name>NAD(+)</name>
        <dbReference type="ChEBI" id="CHEBI:57540"/>
    </ligand>
</feature>
<feature type="binding site" evidence="1">
    <location>
        <position position="122"/>
    </location>
    <ligand>
        <name>substrate</name>
    </ligand>
</feature>
<feature type="binding site" evidence="1">
    <location>
        <position position="153"/>
    </location>
    <ligand>
        <name>substrate</name>
    </ligand>
</feature>
<sequence>MKQHPKISLIGSGNIGGTLAHLISLRELGNIVLFDVTEGVPQGKALDLMQAVTIAGSDIKIKGTNDYKDIKGSDAIIITAGLPRKPGMSRDDLISINTGIMKTVAANVKKYAPDAFVIVITNPLDVMVYVMLKESGLPHNKVIGMAGVLDSSRFNLFLAEEFKVSVSNVNSMVLGGHGDAMVPLARYSTISGVPIPDLIKMGLSSNENIEKIIDRTRNGGGEIVALLKTGSAYYAPAASAIEMLESYLKDKRQILTCAAYLQGEYGVHDLYVGVPIMIGKEGVLKVIELQLTTEEKALFDKSVEGVKKLIETIK</sequence>
<comment type="function">
    <text evidence="1">Catalyzes the reversible oxidation of malate to oxaloacetate.</text>
</comment>
<comment type="catalytic activity">
    <reaction evidence="1">
        <text>(S)-malate + NAD(+) = oxaloacetate + NADH + H(+)</text>
        <dbReference type="Rhea" id="RHEA:21432"/>
        <dbReference type="ChEBI" id="CHEBI:15378"/>
        <dbReference type="ChEBI" id="CHEBI:15589"/>
        <dbReference type="ChEBI" id="CHEBI:16452"/>
        <dbReference type="ChEBI" id="CHEBI:57540"/>
        <dbReference type="ChEBI" id="CHEBI:57945"/>
        <dbReference type="EC" id="1.1.1.37"/>
    </reaction>
</comment>
<comment type="similarity">
    <text evidence="1">Belongs to the LDH/MDH superfamily. MDH type 3 family.</text>
</comment>
<protein>
    <recommendedName>
        <fullName evidence="1">Malate dehydrogenase</fullName>
        <ecNumber evidence="1">1.1.1.37</ecNumber>
    </recommendedName>
</protein>
<gene>
    <name evidence="1" type="primary">mdh</name>
    <name type="ordered locus">RrIowa_0618</name>
</gene>
<dbReference type="EC" id="1.1.1.37" evidence="1"/>
<dbReference type="EMBL" id="CP000766">
    <property type="protein sequence ID" value="ABY72484.1"/>
    <property type="molecule type" value="Genomic_DNA"/>
</dbReference>
<dbReference type="RefSeq" id="WP_012150717.1">
    <property type="nucleotide sequence ID" value="NC_010263.3"/>
</dbReference>
<dbReference type="SMR" id="B0BXA8"/>
<dbReference type="GeneID" id="79937275"/>
<dbReference type="KEGG" id="rrj:RrIowa_0618"/>
<dbReference type="eggNOG" id="COG0039">
    <property type="taxonomic scope" value="Bacteria"/>
</dbReference>
<dbReference type="HOGENOM" id="CLU_045401_2_1_5"/>
<dbReference type="Proteomes" id="UP000000796">
    <property type="component" value="Chromosome"/>
</dbReference>
<dbReference type="GO" id="GO:0004459">
    <property type="term" value="F:L-lactate dehydrogenase activity"/>
    <property type="evidence" value="ECO:0007669"/>
    <property type="project" value="TreeGrafter"/>
</dbReference>
<dbReference type="GO" id="GO:0030060">
    <property type="term" value="F:L-malate dehydrogenase (NAD+) activity"/>
    <property type="evidence" value="ECO:0007669"/>
    <property type="project" value="UniProtKB-UniRule"/>
</dbReference>
<dbReference type="GO" id="GO:0006089">
    <property type="term" value="P:lactate metabolic process"/>
    <property type="evidence" value="ECO:0007669"/>
    <property type="project" value="TreeGrafter"/>
</dbReference>
<dbReference type="GO" id="GO:0006099">
    <property type="term" value="P:tricarboxylic acid cycle"/>
    <property type="evidence" value="ECO:0007669"/>
    <property type="project" value="UniProtKB-UniRule"/>
</dbReference>
<dbReference type="CDD" id="cd01339">
    <property type="entry name" value="LDH-like_MDH"/>
    <property type="match status" value="1"/>
</dbReference>
<dbReference type="FunFam" id="3.40.50.720:FF:000018">
    <property type="entry name" value="Malate dehydrogenase"/>
    <property type="match status" value="1"/>
</dbReference>
<dbReference type="FunFam" id="3.90.110.10:FF:000004">
    <property type="entry name" value="Malate dehydrogenase"/>
    <property type="match status" value="1"/>
</dbReference>
<dbReference type="Gene3D" id="3.90.110.10">
    <property type="entry name" value="Lactate dehydrogenase/glycoside hydrolase, family 4, C-terminal"/>
    <property type="match status" value="1"/>
</dbReference>
<dbReference type="Gene3D" id="3.40.50.720">
    <property type="entry name" value="NAD(P)-binding Rossmann-like Domain"/>
    <property type="match status" value="1"/>
</dbReference>
<dbReference type="HAMAP" id="MF_00487">
    <property type="entry name" value="Malate_dehydrog_3"/>
    <property type="match status" value="1"/>
</dbReference>
<dbReference type="InterPro" id="IPR001557">
    <property type="entry name" value="L-lactate/malate_DH"/>
</dbReference>
<dbReference type="InterPro" id="IPR022383">
    <property type="entry name" value="Lactate/malate_DH_C"/>
</dbReference>
<dbReference type="InterPro" id="IPR001236">
    <property type="entry name" value="Lactate/malate_DH_N"/>
</dbReference>
<dbReference type="InterPro" id="IPR015955">
    <property type="entry name" value="Lactate_DH/Glyco_Ohase_4_C"/>
</dbReference>
<dbReference type="InterPro" id="IPR011275">
    <property type="entry name" value="Malate_DH_type3"/>
</dbReference>
<dbReference type="InterPro" id="IPR036291">
    <property type="entry name" value="NAD(P)-bd_dom_sf"/>
</dbReference>
<dbReference type="NCBIfam" id="TIGR01763">
    <property type="entry name" value="MalateDH_bact"/>
    <property type="match status" value="1"/>
</dbReference>
<dbReference type="NCBIfam" id="NF004863">
    <property type="entry name" value="PRK06223.1"/>
    <property type="match status" value="1"/>
</dbReference>
<dbReference type="PANTHER" id="PTHR43128">
    <property type="entry name" value="L-2-HYDROXYCARBOXYLATE DEHYDROGENASE (NAD(P)(+))"/>
    <property type="match status" value="1"/>
</dbReference>
<dbReference type="PANTHER" id="PTHR43128:SF16">
    <property type="entry name" value="L-LACTATE DEHYDROGENASE"/>
    <property type="match status" value="1"/>
</dbReference>
<dbReference type="Pfam" id="PF02866">
    <property type="entry name" value="Ldh_1_C"/>
    <property type="match status" value="1"/>
</dbReference>
<dbReference type="Pfam" id="PF00056">
    <property type="entry name" value="Ldh_1_N"/>
    <property type="match status" value="1"/>
</dbReference>
<dbReference type="PIRSF" id="PIRSF000102">
    <property type="entry name" value="Lac_mal_DH"/>
    <property type="match status" value="1"/>
</dbReference>
<dbReference type="PRINTS" id="PR00086">
    <property type="entry name" value="LLDHDRGNASE"/>
</dbReference>
<dbReference type="SUPFAM" id="SSF56327">
    <property type="entry name" value="LDH C-terminal domain-like"/>
    <property type="match status" value="1"/>
</dbReference>
<dbReference type="SUPFAM" id="SSF51735">
    <property type="entry name" value="NAD(P)-binding Rossmann-fold domains"/>
    <property type="match status" value="1"/>
</dbReference>
<proteinExistence type="inferred from homology"/>
<accession>B0BXA8</accession>
<organism>
    <name type="scientific">Rickettsia rickettsii (strain Iowa)</name>
    <dbReference type="NCBI Taxonomy" id="452659"/>
    <lineage>
        <taxon>Bacteria</taxon>
        <taxon>Pseudomonadati</taxon>
        <taxon>Pseudomonadota</taxon>
        <taxon>Alphaproteobacteria</taxon>
        <taxon>Rickettsiales</taxon>
        <taxon>Rickettsiaceae</taxon>
        <taxon>Rickettsieae</taxon>
        <taxon>Rickettsia</taxon>
        <taxon>spotted fever group</taxon>
    </lineage>
</organism>
<keyword id="KW-0520">NAD</keyword>
<keyword id="KW-0560">Oxidoreductase</keyword>
<keyword id="KW-0816">Tricarboxylic acid cycle</keyword>
<evidence type="ECO:0000255" key="1">
    <source>
        <dbReference type="HAMAP-Rule" id="MF_00487"/>
    </source>
</evidence>